<name>ILVH_MYCTU</name>
<gene>
    <name type="primary">ilvH</name>
    <name type="synonym">ilvN</name>
    <name type="ordered locus">Rv3002c</name>
    <name type="ORF">MTV012.16c</name>
</gene>
<protein>
    <recommendedName>
        <fullName>Putative acetolactate synthase small subunit</fullName>
        <ecNumber>2.2.1.6</ecNumber>
    </recommendedName>
    <alternativeName>
        <fullName>Acetohydroxy-acid synthase small subunit</fullName>
        <shortName>AHAS</shortName>
        <shortName>ALS</shortName>
    </alternativeName>
</protein>
<keyword id="KW-0028">Amino-acid biosynthesis</keyword>
<keyword id="KW-0100">Branched-chain amino acid biosynthesis</keyword>
<keyword id="KW-1017">Isopeptide bond</keyword>
<keyword id="KW-1185">Reference proteome</keyword>
<keyword id="KW-0808">Transferase</keyword>
<keyword id="KW-0832">Ubl conjugation</keyword>
<accession>P9WKJ3</accession>
<accession>L0TE14</accession>
<accession>O53249</accession>
<accession>P65161</accession>
<evidence type="ECO:0000250" key="1"/>
<evidence type="ECO:0000255" key="2">
    <source>
        <dbReference type="PROSITE-ProRule" id="PRU01007"/>
    </source>
</evidence>
<evidence type="ECO:0000269" key="3">
    <source>
    </source>
</evidence>
<evidence type="ECO:0000269" key="4">
    <source>
    </source>
</evidence>
<evidence type="ECO:0000305" key="5"/>
<organism>
    <name type="scientific">Mycobacterium tuberculosis (strain ATCC 25618 / H37Rv)</name>
    <dbReference type="NCBI Taxonomy" id="83332"/>
    <lineage>
        <taxon>Bacteria</taxon>
        <taxon>Bacillati</taxon>
        <taxon>Actinomycetota</taxon>
        <taxon>Actinomycetes</taxon>
        <taxon>Mycobacteriales</taxon>
        <taxon>Mycobacteriaceae</taxon>
        <taxon>Mycobacterium</taxon>
        <taxon>Mycobacterium tuberculosis complex</taxon>
    </lineage>
</organism>
<proteinExistence type="evidence at protein level"/>
<reference key="1">
    <citation type="journal article" date="1998" name="Nature">
        <title>Deciphering the biology of Mycobacterium tuberculosis from the complete genome sequence.</title>
        <authorList>
            <person name="Cole S.T."/>
            <person name="Brosch R."/>
            <person name="Parkhill J."/>
            <person name="Garnier T."/>
            <person name="Churcher C.M."/>
            <person name="Harris D.E."/>
            <person name="Gordon S.V."/>
            <person name="Eiglmeier K."/>
            <person name="Gas S."/>
            <person name="Barry C.E. III"/>
            <person name="Tekaia F."/>
            <person name="Badcock K."/>
            <person name="Basham D."/>
            <person name="Brown D."/>
            <person name="Chillingworth T."/>
            <person name="Connor R."/>
            <person name="Davies R.M."/>
            <person name="Devlin K."/>
            <person name="Feltwell T."/>
            <person name="Gentles S."/>
            <person name="Hamlin N."/>
            <person name="Holroyd S."/>
            <person name="Hornsby T."/>
            <person name="Jagels K."/>
            <person name="Krogh A."/>
            <person name="McLean J."/>
            <person name="Moule S."/>
            <person name="Murphy L.D."/>
            <person name="Oliver S."/>
            <person name="Osborne J."/>
            <person name="Quail M.A."/>
            <person name="Rajandream M.A."/>
            <person name="Rogers J."/>
            <person name="Rutter S."/>
            <person name="Seeger K."/>
            <person name="Skelton S."/>
            <person name="Squares S."/>
            <person name="Squares R."/>
            <person name="Sulston J.E."/>
            <person name="Taylor K."/>
            <person name="Whitehead S."/>
            <person name="Barrell B.G."/>
        </authorList>
    </citation>
    <scope>NUCLEOTIDE SEQUENCE [LARGE SCALE GENOMIC DNA]</scope>
    <source>
        <strain>ATCC 25618 / H37Rv</strain>
    </source>
</reference>
<reference key="2">
    <citation type="journal article" date="2010" name="PLoS ONE">
        <title>Prokaryotic ubiquitin-like protein (Pup) proteome of Mycobacterium tuberculosis.</title>
        <authorList>
            <person name="Festa R.A."/>
            <person name="McAllister F."/>
            <person name="Pearce M.J."/>
            <person name="Mintseris J."/>
            <person name="Burns K.E."/>
            <person name="Gygi S.P."/>
            <person name="Darwin K.H."/>
        </authorList>
    </citation>
    <scope>PUPYLATION AT LYS-44</scope>
    <scope>IDENTIFICATION BY MASS SPECTROMETRY</scope>
    <source>
        <strain>ATCC 25618 / H37Rv</strain>
    </source>
</reference>
<reference key="3">
    <citation type="journal article" date="2011" name="Microbiology">
        <title>Biochemical and transcription analysis of acetohydroxyacid synthase isoforms in Mycobacterium tuberculosis identifies these enzymes as potential targets for drug development.</title>
        <authorList>
            <person name="Singh V."/>
            <person name="Chandra D."/>
            <person name="Srivastava B.S."/>
            <person name="Srivastava R."/>
        </authorList>
    </citation>
    <scope>INDUCTION</scope>
</reference>
<reference key="4">
    <citation type="journal article" date="2011" name="Mol. Cell. Proteomics">
        <title>Proteogenomic analysis of Mycobacterium tuberculosis by high resolution mass spectrometry.</title>
        <authorList>
            <person name="Kelkar D.S."/>
            <person name="Kumar D."/>
            <person name="Kumar P."/>
            <person name="Balakrishnan L."/>
            <person name="Muthusamy B."/>
            <person name="Yadav A.K."/>
            <person name="Shrivastava P."/>
            <person name="Marimuthu A."/>
            <person name="Anand S."/>
            <person name="Sundaram H."/>
            <person name="Kingsbury R."/>
            <person name="Harsha H.C."/>
            <person name="Nair B."/>
            <person name="Prasad T.S."/>
            <person name="Chauhan D.S."/>
            <person name="Katoch K."/>
            <person name="Katoch V.M."/>
            <person name="Kumar P."/>
            <person name="Chaerkady R."/>
            <person name="Ramachandran S."/>
            <person name="Dash D."/>
            <person name="Pandey A."/>
        </authorList>
    </citation>
    <scope>IDENTIFICATION BY MASS SPECTROMETRY [LARGE SCALE ANALYSIS]</scope>
    <source>
        <strain>ATCC 25618 / H37Rv</strain>
    </source>
</reference>
<feature type="chain" id="PRO_0000151416" description="Putative acetolactate synthase small subunit">
    <location>
        <begin position="1"/>
        <end position="168"/>
    </location>
</feature>
<feature type="domain" description="ACT" evidence="2">
    <location>
        <begin position="7"/>
        <end position="82"/>
    </location>
</feature>
<feature type="cross-link" description="Isoglutamyl lysine isopeptide (Lys-Gln) (interchain with Q-Cter in protein Pup)" evidence="3">
    <location>
        <position position="44"/>
    </location>
</feature>
<sequence length="168" mass="18187">MSPKTHTLSVLVEDKPGVLARVAALFSRRGFNIESLAVGATECKDRSRMTIVVSAEDTPLEQITKQLNKLINVIKIVEQDDEHSVSRELALIKVQADAGSRSQVIEAVNLFRANVIDVSPESLTVEATGNRGKLEALLRVLEPFGIREIAQSGMVSLSRGPRGIGTAK</sequence>
<dbReference type="EC" id="2.2.1.6"/>
<dbReference type="EMBL" id="AL123456">
    <property type="protein sequence ID" value="CCP45808.1"/>
    <property type="molecule type" value="Genomic_DNA"/>
</dbReference>
<dbReference type="PIR" id="E70855">
    <property type="entry name" value="E70855"/>
</dbReference>
<dbReference type="RefSeq" id="NP_217518.1">
    <property type="nucleotide sequence ID" value="NC_000962.3"/>
</dbReference>
<dbReference type="RefSeq" id="WP_003415167.1">
    <property type="nucleotide sequence ID" value="NZ_NVQJ01000041.1"/>
</dbReference>
<dbReference type="SMR" id="P9WKJ3"/>
<dbReference type="FunCoup" id="P9WKJ3">
    <property type="interactions" value="218"/>
</dbReference>
<dbReference type="STRING" id="83332.Rv3002c"/>
<dbReference type="PaxDb" id="83332-Rv3002c"/>
<dbReference type="DNASU" id="887226"/>
<dbReference type="GeneID" id="45426992"/>
<dbReference type="GeneID" id="887226"/>
<dbReference type="KEGG" id="mtu:Rv3002c"/>
<dbReference type="KEGG" id="mtv:RVBD_3002c"/>
<dbReference type="TubercuList" id="Rv3002c"/>
<dbReference type="eggNOG" id="COG0440">
    <property type="taxonomic scope" value="Bacteria"/>
</dbReference>
<dbReference type="InParanoid" id="P9WKJ3"/>
<dbReference type="OrthoDB" id="9787365at2"/>
<dbReference type="PhylomeDB" id="P9WKJ3"/>
<dbReference type="BRENDA" id="2.2.1.6">
    <property type="organism ID" value="3445"/>
</dbReference>
<dbReference type="UniPathway" id="UPA00047">
    <property type="reaction ID" value="UER00055"/>
</dbReference>
<dbReference type="UniPathway" id="UPA00049">
    <property type="reaction ID" value="UER00059"/>
</dbReference>
<dbReference type="Proteomes" id="UP000001584">
    <property type="component" value="Chromosome"/>
</dbReference>
<dbReference type="GO" id="GO:0005829">
    <property type="term" value="C:cytosol"/>
    <property type="evidence" value="ECO:0000318"/>
    <property type="project" value="GO_Central"/>
</dbReference>
<dbReference type="GO" id="GO:0009274">
    <property type="term" value="C:peptidoglycan-based cell wall"/>
    <property type="evidence" value="ECO:0007005"/>
    <property type="project" value="MTBBASE"/>
</dbReference>
<dbReference type="GO" id="GO:0005886">
    <property type="term" value="C:plasma membrane"/>
    <property type="evidence" value="ECO:0007005"/>
    <property type="project" value="MTBBASE"/>
</dbReference>
<dbReference type="GO" id="GO:0003984">
    <property type="term" value="F:acetolactate synthase activity"/>
    <property type="evidence" value="ECO:0000318"/>
    <property type="project" value="GO_Central"/>
</dbReference>
<dbReference type="GO" id="GO:1990610">
    <property type="term" value="F:acetolactate synthase regulator activity"/>
    <property type="evidence" value="ECO:0007669"/>
    <property type="project" value="InterPro"/>
</dbReference>
<dbReference type="GO" id="GO:0009097">
    <property type="term" value="P:isoleucine biosynthetic process"/>
    <property type="evidence" value="ECO:0000318"/>
    <property type="project" value="GO_Central"/>
</dbReference>
<dbReference type="GO" id="GO:0009099">
    <property type="term" value="P:L-valine biosynthetic process"/>
    <property type="evidence" value="ECO:0000318"/>
    <property type="project" value="GO_Central"/>
</dbReference>
<dbReference type="CDD" id="cd04878">
    <property type="entry name" value="ACT_AHAS"/>
    <property type="match status" value="1"/>
</dbReference>
<dbReference type="FunFam" id="3.30.70.1150:FF:000001">
    <property type="entry name" value="Acetolactate synthase small subunit"/>
    <property type="match status" value="1"/>
</dbReference>
<dbReference type="FunFam" id="3.30.70.260:FF:000001">
    <property type="entry name" value="Acetolactate synthase, small subunit"/>
    <property type="match status" value="1"/>
</dbReference>
<dbReference type="Gene3D" id="3.30.70.260">
    <property type="match status" value="1"/>
</dbReference>
<dbReference type="Gene3D" id="3.30.70.1150">
    <property type="entry name" value="ACT-like. Chain A, domain 2"/>
    <property type="match status" value="1"/>
</dbReference>
<dbReference type="InterPro" id="IPR004789">
    <property type="entry name" value="Acetalactate_synth_ssu"/>
</dbReference>
<dbReference type="InterPro" id="IPR027271">
    <property type="entry name" value="Acetolactate_synth/TF_NikR_C"/>
</dbReference>
<dbReference type="InterPro" id="IPR019455">
    <property type="entry name" value="Acetolactate_synth_ssu_C"/>
</dbReference>
<dbReference type="InterPro" id="IPR045865">
    <property type="entry name" value="ACT-like_dom_sf"/>
</dbReference>
<dbReference type="InterPro" id="IPR002912">
    <property type="entry name" value="ACT_dom"/>
</dbReference>
<dbReference type="InterPro" id="IPR039557">
    <property type="entry name" value="AHAS_ACT"/>
</dbReference>
<dbReference type="InterPro" id="IPR054480">
    <property type="entry name" value="AHAS_small-like_ACT"/>
</dbReference>
<dbReference type="NCBIfam" id="TIGR00119">
    <property type="entry name" value="acolac_sm"/>
    <property type="match status" value="1"/>
</dbReference>
<dbReference type="NCBIfam" id="NF008864">
    <property type="entry name" value="PRK11895.1"/>
    <property type="match status" value="1"/>
</dbReference>
<dbReference type="PANTHER" id="PTHR30239">
    <property type="entry name" value="ACETOLACTATE SYNTHASE SMALL SUBUNIT"/>
    <property type="match status" value="1"/>
</dbReference>
<dbReference type="PANTHER" id="PTHR30239:SF0">
    <property type="entry name" value="ACETOLACTATE SYNTHASE SMALL SUBUNIT 1, CHLOROPLASTIC"/>
    <property type="match status" value="1"/>
</dbReference>
<dbReference type="Pfam" id="PF22629">
    <property type="entry name" value="ACT_AHAS_ss"/>
    <property type="match status" value="1"/>
</dbReference>
<dbReference type="Pfam" id="PF10369">
    <property type="entry name" value="ALS_ss_C"/>
    <property type="match status" value="1"/>
</dbReference>
<dbReference type="SUPFAM" id="SSF55021">
    <property type="entry name" value="ACT-like"/>
    <property type="match status" value="2"/>
</dbReference>
<dbReference type="PROSITE" id="PS51671">
    <property type="entry name" value="ACT"/>
    <property type="match status" value="1"/>
</dbReference>
<comment type="function">
    <text evidence="1">Catalyzes the conversion of 2 pyruvate molecules into acetolactate in the first common step of the biosynthetic pathway of the branched-amino acids such as leucine, isoleucine, and valine.</text>
</comment>
<comment type="catalytic activity">
    <reaction>
        <text>2 pyruvate + H(+) = (2S)-2-acetolactate + CO2</text>
        <dbReference type="Rhea" id="RHEA:25249"/>
        <dbReference type="ChEBI" id="CHEBI:15361"/>
        <dbReference type="ChEBI" id="CHEBI:15378"/>
        <dbReference type="ChEBI" id="CHEBI:16526"/>
        <dbReference type="ChEBI" id="CHEBI:58476"/>
        <dbReference type="EC" id="2.2.1.6"/>
    </reaction>
</comment>
<comment type="pathway">
    <text>Amino-acid biosynthesis; L-isoleucine biosynthesis; L-isoleucine from 2-oxobutanoate: step 1/4.</text>
</comment>
<comment type="pathway">
    <text>Amino-acid biosynthesis; L-valine biosynthesis; L-valine from pyruvate: step 1/4.</text>
</comment>
<comment type="subunit">
    <text evidence="1">Dimer of large and small chains.</text>
</comment>
<comment type="induction">
    <text evidence="4">The expression gradually decreases as growth progresses.</text>
</comment>
<comment type="similarity">
    <text evidence="5">Belongs to the acetolactate synthase small subunit family.</text>
</comment>